<comment type="function">
    <text evidence="2">Converts 2-succinyl-6-hydroxy-2,4-cyclohexadiene-1-carboxylate (SHCHC) to 2-succinylbenzoate (OSB) (PubMed:24872444). Also acts as a N-succinylamino acid racemase (NSAR) that catalyzes the racemization of N-succinyl-L-phenylglycine (PubMed:24872444). Since the gene is encoded in a menaquinone synthesis operon, OSB synthase is probably the physiological activity. A pathway that requires NSAR activity has not been identified in this species, so whether NSAR is also a biological activity is unknown (PubMed:24872444).</text>
</comment>
<comment type="catalytic activity">
    <reaction evidence="1 2">
        <text>(1R,6R)-6-hydroxy-2-succinyl-cyclohexa-2,4-diene-1-carboxylate = 2-succinylbenzoate + H2O</text>
        <dbReference type="Rhea" id="RHEA:10196"/>
        <dbReference type="ChEBI" id="CHEBI:15377"/>
        <dbReference type="ChEBI" id="CHEBI:18325"/>
        <dbReference type="ChEBI" id="CHEBI:58689"/>
        <dbReference type="EC" id="4.2.1.113"/>
    </reaction>
</comment>
<comment type="cofactor">
    <cofactor evidence="1 2">
        <name>a divalent metal cation</name>
        <dbReference type="ChEBI" id="CHEBI:60240"/>
    </cofactor>
</comment>
<comment type="biophysicochemical properties">
    <kinetics>
        <KM evidence="2">72 uM for SHCHC</KM>
        <KM evidence="2">170 uM for N-succinyl-L-phenylglycine</KM>
        <text evidence="2">kcat is 120 sec(-1) with SHCHC as substrate. kcat is 24 sec(-1) with N-succinyl-L-phenylglycine as substrate.</text>
    </kinetics>
</comment>
<comment type="pathway">
    <text evidence="1">Quinol/quinone metabolism; 1,4-dihydroxy-2-naphthoate biosynthesis; 1,4-dihydroxy-2-naphthoate from chorismate: step 4/7.</text>
</comment>
<comment type="pathway">
    <text evidence="1">Quinol/quinone metabolism; menaquinone biosynthesis.</text>
</comment>
<comment type="subunit">
    <text evidence="2">Homodimer.</text>
</comment>
<comment type="similarity">
    <text evidence="1">Belongs to the mandelate racemase/muconate lactonizing enzyme family. MenC type 2 subfamily.</text>
</comment>
<keyword id="KW-0002">3D-structure</keyword>
<keyword id="KW-0413">Isomerase</keyword>
<keyword id="KW-0456">Lyase</keyword>
<keyword id="KW-0460">Magnesium</keyword>
<keyword id="KW-0474">Menaquinone biosynthesis</keyword>
<keyword id="KW-0479">Metal-binding</keyword>
<keyword id="KW-1185">Reference proteome</keyword>
<gene>
    <name evidence="1" type="primary">menC</name>
    <name evidence="4" type="ordered locus">EF_0450</name>
</gene>
<name>MENC_ENTFA</name>
<feature type="chain" id="PRO_0000455096" description="o-succinylbenzoate synthase">
    <location>
        <begin position="1"/>
        <end position="367"/>
    </location>
</feature>
<feature type="active site" description="Proton donor" evidence="1">
    <location>
        <position position="164"/>
    </location>
</feature>
<feature type="active site" description="Proton acceptor" evidence="1">
    <location>
        <position position="263"/>
    </location>
</feature>
<feature type="binding site" evidence="1">
    <location>
        <position position="189"/>
    </location>
    <ligand>
        <name>Mg(2+)</name>
        <dbReference type="ChEBI" id="CHEBI:18420"/>
    </ligand>
</feature>
<feature type="binding site" evidence="1">
    <location>
        <position position="214"/>
    </location>
    <ligand>
        <name>Mg(2+)</name>
        <dbReference type="ChEBI" id="CHEBI:18420"/>
    </ligand>
</feature>
<feature type="binding site" evidence="1">
    <location>
        <position position="239"/>
    </location>
    <ligand>
        <name>Mg(2+)</name>
        <dbReference type="ChEBI" id="CHEBI:18420"/>
    </ligand>
</feature>
<feature type="strand" evidence="6">
    <location>
        <begin position="3"/>
        <end position="21"/>
    </location>
</feature>
<feature type="strand" evidence="6">
    <location>
        <begin position="24"/>
        <end position="38"/>
    </location>
</feature>
<feature type="strand" evidence="6">
    <location>
        <begin position="43"/>
        <end position="48"/>
    </location>
</feature>
<feature type="strand" evidence="6">
    <location>
        <begin position="56"/>
        <end position="58"/>
    </location>
</feature>
<feature type="helix" evidence="6">
    <location>
        <begin position="61"/>
        <end position="70"/>
    </location>
</feature>
<feature type="helix" evidence="6">
    <location>
        <begin position="72"/>
        <end position="76"/>
    </location>
</feature>
<feature type="helix" evidence="6">
    <location>
        <begin position="86"/>
        <end position="90"/>
    </location>
</feature>
<feature type="helix" evidence="6">
    <location>
        <begin position="91"/>
        <end position="93"/>
    </location>
</feature>
<feature type="helix" evidence="6">
    <location>
        <begin position="98"/>
        <end position="115"/>
    </location>
</feature>
<feature type="helix" evidence="6">
    <location>
        <begin position="120"/>
        <end position="123"/>
    </location>
</feature>
<feature type="strand" evidence="6">
    <location>
        <begin position="124"/>
        <end position="126"/>
    </location>
</feature>
<feature type="strand" evidence="6">
    <location>
        <begin position="129"/>
        <end position="132"/>
    </location>
</feature>
<feature type="strand" evidence="6">
    <location>
        <begin position="135"/>
        <end position="137"/>
    </location>
</feature>
<feature type="helix" evidence="6">
    <location>
        <begin position="143"/>
        <end position="155"/>
    </location>
</feature>
<feature type="strand" evidence="6">
    <location>
        <begin position="161"/>
        <end position="164"/>
    </location>
</feature>
<feature type="helix" evidence="6">
    <location>
        <begin position="171"/>
        <end position="180"/>
    </location>
</feature>
<feature type="strand" evidence="6">
    <location>
        <begin position="186"/>
        <end position="189"/>
    </location>
</feature>
<feature type="helix" evidence="6">
    <location>
        <begin position="196"/>
        <end position="198"/>
    </location>
</feature>
<feature type="helix" evidence="6">
    <location>
        <begin position="199"/>
        <end position="203"/>
    </location>
</feature>
<feature type="helix" evidence="6">
    <location>
        <begin position="204"/>
        <end position="207"/>
    </location>
</feature>
<feature type="helix" evidence="6">
    <location>
        <begin position="223"/>
        <end position="229"/>
    </location>
</feature>
<feature type="strand" evidence="6">
    <location>
        <begin position="236"/>
        <end position="238"/>
    </location>
</feature>
<feature type="helix" evidence="6">
    <location>
        <begin position="245"/>
        <end position="254"/>
    </location>
</feature>
<feature type="strand" evidence="6">
    <location>
        <begin position="258"/>
        <end position="262"/>
    </location>
</feature>
<feature type="helix" evidence="6">
    <location>
        <begin position="264"/>
        <end position="267"/>
    </location>
</feature>
<feature type="helix" evidence="6">
    <location>
        <begin position="270"/>
        <end position="282"/>
    </location>
</feature>
<feature type="strand" evidence="6">
    <location>
        <begin position="286"/>
        <end position="289"/>
    </location>
</feature>
<feature type="helix" evidence="6">
    <location>
        <begin position="296"/>
        <end position="306"/>
    </location>
</feature>
<feature type="helix" evidence="6">
    <location>
        <begin position="320"/>
        <end position="322"/>
    </location>
</feature>
<feature type="strand" evidence="6">
    <location>
        <begin position="328"/>
        <end position="331"/>
    </location>
</feature>
<feature type="strand" evidence="6">
    <location>
        <begin position="339"/>
        <end position="341"/>
    </location>
</feature>
<feature type="strand" evidence="6">
    <location>
        <begin position="345"/>
        <end position="347"/>
    </location>
</feature>
<feature type="helix" evidence="6">
    <location>
        <begin position="354"/>
        <end position="360"/>
    </location>
</feature>
<feature type="strand" evidence="6">
    <location>
        <begin position="361"/>
        <end position="367"/>
    </location>
</feature>
<accession>Q838J7</accession>
<organism>
    <name type="scientific">Enterococcus faecalis (strain ATCC 700802 / V583)</name>
    <dbReference type="NCBI Taxonomy" id="226185"/>
    <lineage>
        <taxon>Bacteria</taxon>
        <taxon>Bacillati</taxon>
        <taxon>Bacillota</taxon>
        <taxon>Bacilli</taxon>
        <taxon>Lactobacillales</taxon>
        <taxon>Enterococcaceae</taxon>
        <taxon>Enterococcus</taxon>
    </lineage>
</organism>
<proteinExistence type="evidence at protein level"/>
<protein>
    <recommendedName>
        <fullName evidence="1 3">o-succinylbenzoate synthase</fullName>
        <shortName evidence="1">OSB synthase</shortName>
        <shortName evidence="1 3">OSBS</shortName>
        <ecNumber evidence="1 2">4.2.1.113</ecNumber>
    </recommendedName>
    <alternativeName>
        <fullName evidence="1">4-(2'-carboxyphenyl)-4-oxybutyric acid synthase</fullName>
    </alternativeName>
    <alternativeName>
        <fullName evidence="3">N-succinylamino acid racemase</fullName>
        <shortName evidence="3">NSAR</shortName>
        <ecNumber evidence="2">5.1.1.-</ecNumber>
    </alternativeName>
    <alternativeName>
        <fullName evidence="1">o-succinylbenzoic acid synthase</fullName>
    </alternativeName>
</protein>
<sequence>MNIQSIETYQVRLPLKTPFVTSYGRLEEKAFDLFVITDEQGNQGFGELVAFEQPDYVQETLVTERFIIQQHLIPLLLTEAIEQPQEVSTIFEEVKGHWMGKAALETAIWDLYAKRQQKSLTEFFGPTRRKIPVGISLGIQEDLPQLLKQVQLAVEKGYQRVKLKIRPGYDVEPVALIRQHFPNLPLMVDANSAYTLADLPQLQRLDHYQLAMIEQPFAADDFLDHAQLQRELKTRICLDENIRSLKDCQVALALGSCRSINLKIPRVGGIHEALKIAAFCQENDLLVWLGGMFESGVGRALNLQFASQPTFSFPGDISATERYFYEDIITEPFILEQGTMTVPQGLGIGVTLSQTNLLKYSQYQKIM</sequence>
<evidence type="ECO:0000255" key="1">
    <source>
        <dbReference type="HAMAP-Rule" id="MF_01933"/>
    </source>
</evidence>
<evidence type="ECO:0000269" key="2">
    <source>
    </source>
</evidence>
<evidence type="ECO:0000303" key="3">
    <source>
    </source>
</evidence>
<evidence type="ECO:0000312" key="4">
    <source>
        <dbReference type="EMBL" id="AAO80305.1"/>
    </source>
</evidence>
<evidence type="ECO:0007744" key="5">
    <source>
        <dbReference type="PDB" id="1WUE"/>
    </source>
</evidence>
<evidence type="ECO:0007829" key="6">
    <source>
        <dbReference type="PDB" id="1WUE"/>
    </source>
</evidence>
<reference key="1">
    <citation type="journal article" date="2003" name="Science">
        <title>Role of mobile DNA in the evolution of vancomycin-resistant Enterococcus faecalis.</title>
        <authorList>
            <person name="Paulsen I.T."/>
            <person name="Banerjei L."/>
            <person name="Myers G.S.A."/>
            <person name="Nelson K.E."/>
            <person name="Seshadri R."/>
            <person name="Read T.D."/>
            <person name="Fouts D.E."/>
            <person name="Eisen J.A."/>
            <person name="Gill S.R."/>
            <person name="Heidelberg J.F."/>
            <person name="Tettelin H."/>
            <person name="Dodson R.J."/>
            <person name="Umayam L.A."/>
            <person name="Brinkac L.M."/>
            <person name="Beanan M.J."/>
            <person name="Daugherty S.C."/>
            <person name="DeBoy R.T."/>
            <person name="Durkin S.A."/>
            <person name="Kolonay J.F."/>
            <person name="Madupu R."/>
            <person name="Nelson W.C."/>
            <person name="Vamathevan J.J."/>
            <person name="Tran B."/>
            <person name="Upton J."/>
            <person name="Hansen T."/>
            <person name="Shetty J."/>
            <person name="Khouri H.M."/>
            <person name="Utterback T.R."/>
            <person name="Radune D."/>
            <person name="Ketchum K.A."/>
            <person name="Dougherty B.A."/>
            <person name="Fraser C.M."/>
        </authorList>
    </citation>
    <scope>NUCLEOTIDE SEQUENCE [LARGE SCALE GENOMIC DNA]</scope>
    <source>
        <strain>ATCC 700802 / V583</strain>
    </source>
</reference>
<reference evidence="5" key="2">
    <citation type="journal article" date="2014" name="Proc. Natl. Acad. Sci. U.S.A.">
        <title>Loss of quaternary structure is associated with rapid sequence divergence in the OSBS family.</title>
        <authorList>
            <person name="Odokonyero D."/>
            <person name="Sakai A."/>
            <person name="Patskovsky Y."/>
            <person name="Malashkevich V.N."/>
            <person name="Fedorov A.A."/>
            <person name="Bonanno J.B."/>
            <person name="Fedorov E.V."/>
            <person name="Toro R."/>
            <person name="Agarwal R."/>
            <person name="Wang C."/>
            <person name="Ozerova N.D."/>
            <person name="Yew W.S."/>
            <person name="Sauder J.M."/>
            <person name="Swaminathan S."/>
            <person name="Burley S.K."/>
            <person name="Almo S.C."/>
            <person name="Glasner M.E."/>
        </authorList>
    </citation>
    <scope>X-RAY CRYSTALLOGRAPHY (2.10 ANGSTROMS)</scope>
    <scope>FUNCTION</scope>
    <scope>CATALYTIC ACTIVITY</scope>
    <scope>COFACTOR</scope>
    <scope>BIOPHYSICOCHEMICAL PROPERTIES</scope>
    <scope>SUBUNIT</scope>
    <source>
        <strain>ATCC 700802 / V583</strain>
    </source>
</reference>
<dbReference type="EC" id="4.2.1.113" evidence="1 2"/>
<dbReference type="EC" id="5.1.1.-" evidence="2"/>
<dbReference type="EMBL" id="AE016830">
    <property type="protein sequence ID" value="AAO80305.1"/>
    <property type="molecule type" value="Genomic_DNA"/>
</dbReference>
<dbReference type="RefSeq" id="NP_814234.1">
    <property type="nucleotide sequence ID" value="NC_004668.1"/>
</dbReference>
<dbReference type="RefSeq" id="WP_002387683.1">
    <property type="nucleotide sequence ID" value="NZ_KE136524.1"/>
</dbReference>
<dbReference type="PDB" id="1WUE">
    <property type="method" value="X-ray"/>
    <property type="resolution" value="2.10 A"/>
    <property type="chains" value="A/B=1-367"/>
</dbReference>
<dbReference type="PDBsum" id="1WUE"/>
<dbReference type="SMR" id="Q838J7"/>
<dbReference type="STRING" id="226185.EF_0450"/>
<dbReference type="EnsemblBacteria" id="AAO80305">
    <property type="protein sequence ID" value="AAO80305"/>
    <property type="gene ID" value="EF_0450"/>
</dbReference>
<dbReference type="KEGG" id="efa:EF0450"/>
<dbReference type="PATRIC" id="fig|226185.45.peg.2885"/>
<dbReference type="eggNOG" id="COG4948">
    <property type="taxonomic scope" value="Bacteria"/>
</dbReference>
<dbReference type="HOGENOM" id="CLU_030273_4_4_9"/>
<dbReference type="UniPathway" id="UPA00079"/>
<dbReference type="UniPathway" id="UPA01057">
    <property type="reaction ID" value="UER00165"/>
</dbReference>
<dbReference type="EvolutionaryTrace" id="Q838J7"/>
<dbReference type="Proteomes" id="UP000001415">
    <property type="component" value="Chromosome"/>
</dbReference>
<dbReference type="GO" id="GO:0016853">
    <property type="term" value="F:isomerase activity"/>
    <property type="evidence" value="ECO:0007669"/>
    <property type="project" value="UniProtKB-KW"/>
</dbReference>
<dbReference type="GO" id="GO:0000287">
    <property type="term" value="F:magnesium ion binding"/>
    <property type="evidence" value="ECO:0007669"/>
    <property type="project" value="UniProtKB-UniRule"/>
</dbReference>
<dbReference type="GO" id="GO:0043748">
    <property type="term" value="F:O-succinylbenzoate synthase activity"/>
    <property type="evidence" value="ECO:0007669"/>
    <property type="project" value="UniProtKB-EC"/>
</dbReference>
<dbReference type="GO" id="GO:0009234">
    <property type="term" value="P:menaquinone biosynthetic process"/>
    <property type="evidence" value="ECO:0007669"/>
    <property type="project" value="UniProtKB-UniRule"/>
</dbReference>
<dbReference type="CDD" id="cd03317">
    <property type="entry name" value="NAAAR"/>
    <property type="match status" value="1"/>
</dbReference>
<dbReference type="Gene3D" id="3.20.20.120">
    <property type="entry name" value="Enolase-like C-terminal domain"/>
    <property type="match status" value="1"/>
</dbReference>
<dbReference type="Gene3D" id="3.30.390.10">
    <property type="entry name" value="Enolase-like, N-terminal domain"/>
    <property type="match status" value="1"/>
</dbReference>
<dbReference type="HAMAP" id="MF_01933">
    <property type="entry name" value="MenC_2"/>
    <property type="match status" value="1"/>
</dbReference>
<dbReference type="InterPro" id="IPR036849">
    <property type="entry name" value="Enolase-like_C_sf"/>
</dbReference>
<dbReference type="InterPro" id="IPR029017">
    <property type="entry name" value="Enolase-like_N"/>
</dbReference>
<dbReference type="InterPro" id="IPR029065">
    <property type="entry name" value="Enolase_C-like"/>
</dbReference>
<dbReference type="InterPro" id="IPR013342">
    <property type="entry name" value="Mandelate_racemase_C"/>
</dbReference>
<dbReference type="InterPro" id="IPR013341">
    <property type="entry name" value="Mandelate_racemase_N_dom"/>
</dbReference>
<dbReference type="InterPro" id="IPR047585">
    <property type="entry name" value="MenC"/>
</dbReference>
<dbReference type="InterPro" id="IPR010197">
    <property type="entry name" value="OSBS/NAAAR"/>
</dbReference>
<dbReference type="NCBIfam" id="TIGR01928">
    <property type="entry name" value="menC_lowGC_arch"/>
    <property type="match status" value="1"/>
</dbReference>
<dbReference type="PANTHER" id="PTHR48073:SF5">
    <property type="entry name" value="O-SUCCINYLBENZOATE SYNTHASE"/>
    <property type="match status" value="1"/>
</dbReference>
<dbReference type="PANTHER" id="PTHR48073">
    <property type="entry name" value="O-SUCCINYLBENZOATE SYNTHASE-RELATED"/>
    <property type="match status" value="1"/>
</dbReference>
<dbReference type="Pfam" id="PF13378">
    <property type="entry name" value="MR_MLE_C"/>
    <property type="match status" value="1"/>
</dbReference>
<dbReference type="Pfam" id="PF02746">
    <property type="entry name" value="MR_MLE_N"/>
    <property type="match status" value="1"/>
</dbReference>
<dbReference type="SFLD" id="SFLDS00001">
    <property type="entry name" value="Enolase"/>
    <property type="match status" value="1"/>
</dbReference>
<dbReference type="SFLD" id="SFLDF00009">
    <property type="entry name" value="o-succinylbenzoate_synthase"/>
    <property type="match status" value="1"/>
</dbReference>
<dbReference type="SMART" id="SM00922">
    <property type="entry name" value="MR_MLE"/>
    <property type="match status" value="1"/>
</dbReference>
<dbReference type="SUPFAM" id="SSF51604">
    <property type="entry name" value="Enolase C-terminal domain-like"/>
    <property type="match status" value="1"/>
</dbReference>
<dbReference type="SUPFAM" id="SSF54826">
    <property type="entry name" value="Enolase N-terminal domain-like"/>
    <property type="match status" value="1"/>
</dbReference>